<dbReference type="EC" id="3.6.5.n1" evidence="1"/>
<dbReference type="EMBL" id="CP000572">
    <property type="protein sequence ID" value="ABN90509.1"/>
    <property type="molecule type" value="Genomic_DNA"/>
</dbReference>
<dbReference type="RefSeq" id="WP_004193305.1">
    <property type="nucleotide sequence ID" value="NC_009076.1"/>
</dbReference>
<dbReference type="SMR" id="A3NXL8"/>
<dbReference type="GeneID" id="93061011"/>
<dbReference type="KEGG" id="bpl:BURPS1106A_2842"/>
<dbReference type="HOGENOM" id="CLU_009995_3_3_4"/>
<dbReference type="Proteomes" id="UP000006738">
    <property type="component" value="Chromosome I"/>
</dbReference>
<dbReference type="GO" id="GO:0005886">
    <property type="term" value="C:plasma membrane"/>
    <property type="evidence" value="ECO:0007669"/>
    <property type="project" value="UniProtKB-SubCell"/>
</dbReference>
<dbReference type="GO" id="GO:0005525">
    <property type="term" value="F:GTP binding"/>
    <property type="evidence" value="ECO:0007669"/>
    <property type="project" value="UniProtKB-UniRule"/>
</dbReference>
<dbReference type="GO" id="GO:0003924">
    <property type="term" value="F:GTPase activity"/>
    <property type="evidence" value="ECO:0007669"/>
    <property type="project" value="UniProtKB-UniRule"/>
</dbReference>
<dbReference type="GO" id="GO:0097216">
    <property type="term" value="F:guanosine tetraphosphate binding"/>
    <property type="evidence" value="ECO:0007669"/>
    <property type="project" value="UniProtKB-ARBA"/>
</dbReference>
<dbReference type="GO" id="GO:0043022">
    <property type="term" value="F:ribosome binding"/>
    <property type="evidence" value="ECO:0007669"/>
    <property type="project" value="UniProtKB-UniRule"/>
</dbReference>
<dbReference type="GO" id="GO:0003746">
    <property type="term" value="F:translation elongation factor activity"/>
    <property type="evidence" value="ECO:0007669"/>
    <property type="project" value="UniProtKB-UniRule"/>
</dbReference>
<dbReference type="GO" id="GO:0045727">
    <property type="term" value="P:positive regulation of translation"/>
    <property type="evidence" value="ECO:0007669"/>
    <property type="project" value="UniProtKB-UniRule"/>
</dbReference>
<dbReference type="CDD" id="cd03699">
    <property type="entry name" value="EF4_II"/>
    <property type="match status" value="1"/>
</dbReference>
<dbReference type="CDD" id="cd16260">
    <property type="entry name" value="EF4_III"/>
    <property type="match status" value="1"/>
</dbReference>
<dbReference type="CDD" id="cd01890">
    <property type="entry name" value="LepA"/>
    <property type="match status" value="1"/>
</dbReference>
<dbReference type="CDD" id="cd03709">
    <property type="entry name" value="lepA_C"/>
    <property type="match status" value="1"/>
</dbReference>
<dbReference type="FunFam" id="3.40.50.300:FF:000078">
    <property type="entry name" value="Elongation factor 4"/>
    <property type="match status" value="1"/>
</dbReference>
<dbReference type="FunFam" id="2.40.30.10:FF:000015">
    <property type="entry name" value="Translation factor GUF1, mitochondrial"/>
    <property type="match status" value="1"/>
</dbReference>
<dbReference type="FunFam" id="3.30.70.240:FF:000007">
    <property type="entry name" value="Translation factor GUF1, mitochondrial"/>
    <property type="match status" value="1"/>
</dbReference>
<dbReference type="FunFam" id="3.30.70.2570:FF:000001">
    <property type="entry name" value="Translation factor GUF1, mitochondrial"/>
    <property type="match status" value="1"/>
</dbReference>
<dbReference type="FunFam" id="3.30.70.870:FF:000004">
    <property type="entry name" value="Translation factor GUF1, mitochondrial"/>
    <property type="match status" value="1"/>
</dbReference>
<dbReference type="Gene3D" id="3.30.70.240">
    <property type="match status" value="1"/>
</dbReference>
<dbReference type="Gene3D" id="3.30.70.2570">
    <property type="entry name" value="Elongation factor 4, C-terminal domain"/>
    <property type="match status" value="1"/>
</dbReference>
<dbReference type="Gene3D" id="3.30.70.870">
    <property type="entry name" value="Elongation Factor G (Translational Gtpase), domain 3"/>
    <property type="match status" value="1"/>
</dbReference>
<dbReference type="Gene3D" id="3.40.50.300">
    <property type="entry name" value="P-loop containing nucleotide triphosphate hydrolases"/>
    <property type="match status" value="1"/>
</dbReference>
<dbReference type="Gene3D" id="2.40.30.10">
    <property type="entry name" value="Translation factors"/>
    <property type="match status" value="1"/>
</dbReference>
<dbReference type="HAMAP" id="MF_00071">
    <property type="entry name" value="LepA"/>
    <property type="match status" value="1"/>
</dbReference>
<dbReference type="InterPro" id="IPR006297">
    <property type="entry name" value="EF-4"/>
</dbReference>
<dbReference type="InterPro" id="IPR035647">
    <property type="entry name" value="EFG_III/V"/>
</dbReference>
<dbReference type="InterPro" id="IPR000640">
    <property type="entry name" value="EFG_V-like"/>
</dbReference>
<dbReference type="InterPro" id="IPR004161">
    <property type="entry name" value="EFTu-like_2"/>
</dbReference>
<dbReference type="InterPro" id="IPR031157">
    <property type="entry name" value="G_TR_CS"/>
</dbReference>
<dbReference type="InterPro" id="IPR038363">
    <property type="entry name" value="LepA_C_sf"/>
</dbReference>
<dbReference type="InterPro" id="IPR013842">
    <property type="entry name" value="LepA_CTD"/>
</dbReference>
<dbReference type="InterPro" id="IPR035654">
    <property type="entry name" value="LepA_IV"/>
</dbReference>
<dbReference type="InterPro" id="IPR027417">
    <property type="entry name" value="P-loop_NTPase"/>
</dbReference>
<dbReference type="InterPro" id="IPR005225">
    <property type="entry name" value="Small_GTP-bd"/>
</dbReference>
<dbReference type="InterPro" id="IPR000795">
    <property type="entry name" value="T_Tr_GTP-bd_dom"/>
</dbReference>
<dbReference type="InterPro" id="IPR009000">
    <property type="entry name" value="Transl_B-barrel_sf"/>
</dbReference>
<dbReference type="NCBIfam" id="TIGR01393">
    <property type="entry name" value="lepA"/>
    <property type="match status" value="1"/>
</dbReference>
<dbReference type="NCBIfam" id="TIGR00231">
    <property type="entry name" value="small_GTP"/>
    <property type="match status" value="1"/>
</dbReference>
<dbReference type="PANTHER" id="PTHR43512:SF4">
    <property type="entry name" value="TRANSLATION FACTOR GUF1 HOMOLOG, CHLOROPLASTIC"/>
    <property type="match status" value="1"/>
</dbReference>
<dbReference type="PANTHER" id="PTHR43512">
    <property type="entry name" value="TRANSLATION FACTOR GUF1-RELATED"/>
    <property type="match status" value="1"/>
</dbReference>
<dbReference type="Pfam" id="PF00679">
    <property type="entry name" value="EFG_C"/>
    <property type="match status" value="1"/>
</dbReference>
<dbReference type="Pfam" id="PF00009">
    <property type="entry name" value="GTP_EFTU"/>
    <property type="match status" value="1"/>
</dbReference>
<dbReference type="Pfam" id="PF03144">
    <property type="entry name" value="GTP_EFTU_D2"/>
    <property type="match status" value="1"/>
</dbReference>
<dbReference type="Pfam" id="PF06421">
    <property type="entry name" value="LepA_C"/>
    <property type="match status" value="1"/>
</dbReference>
<dbReference type="PRINTS" id="PR00315">
    <property type="entry name" value="ELONGATNFCT"/>
</dbReference>
<dbReference type="SMART" id="SM00838">
    <property type="entry name" value="EFG_C"/>
    <property type="match status" value="1"/>
</dbReference>
<dbReference type="SUPFAM" id="SSF54980">
    <property type="entry name" value="EF-G C-terminal domain-like"/>
    <property type="match status" value="2"/>
</dbReference>
<dbReference type="SUPFAM" id="SSF52540">
    <property type="entry name" value="P-loop containing nucleoside triphosphate hydrolases"/>
    <property type="match status" value="1"/>
</dbReference>
<dbReference type="SUPFAM" id="SSF50447">
    <property type="entry name" value="Translation proteins"/>
    <property type="match status" value="1"/>
</dbReference>
<dbReference type="PROSITE" id="PS00301">
    <property type="entry name" value="G_TR_1"/>
    <property type="match status" value="1"/>
</dbReference>
<dbReference type="PROSITE" id="PS51722">
    <property type="entry name" value="G_TR_2"/>
    <property type="match status" value="1"/>
</dbReference>
<proteinExistence type="inferred from homology"/>
<feature type="chain" id="PRO_1000031977" description="Elongation factor 4">
    <location>
        <begin position="1"/>
        <end position="597"/>
    </location>
</feature>
<feature type="domain" description="tr-type G">
    <location>
        <begin position="2"/>
        <end position="184"/>
    </location>
</feature>
<feature type="binding site" evidence="1">
    <location>
        <begin position="14"/>
        <end position="19"/>
    </location>
    <ligand>
        <name>GTP</name>
        <dbReference type="ChEBI" id="CHEBI:37565"/>
    </ligand>
</feature>
<feature type="binding site" evidence="1">
    <location>
        <begin position="131"/>
        <end position="134"/>
    </location>
    <ligand>
        <name>GTP</name>
        <dbReference type="ChEBI" id="CHEBI:37565"/>
    </ligand>
</feature>
<protein>
    <recommendedName>
        <fullName evidence="1">Elongation factor 4</fullName>
        <shortName evidence="1">EF-4</shortName>
        <ecNumber evidence="1">3.6.5.n1</ecNumber>
    </recommendedName>
    <alternativeName>
        <fullName evidence="1">Ribosomal back-translocase LepA</fullName>
    </alternativeName>
</protein>
<name>LEPA_BURP0</name>
<sequence length="597" mass="66221">MDHIRNFSIIAHIDHGKSTLADRIIQLCGGLSDREMESQVLDSMDLERERGITIKAQTAALTYRARDGKVYNLNLIDTPGHVDFSYEVSRSLSACEGALLVVDASQGVEAQTVANCYTAIELGVEVVPVLNKIDLPAANPENAIAEIEDVIGIDAMDAVRCSAKTGLGVEDVLESLIAKVPPPKGDPDAPLQALIIDSWFDNYVGVVMLVRIVNGTLRPKERIKLMATDAQYAVEHVGVFTPKSRNLESLSAGQVGFIISGIKELTAAKVGDTVTHATKPAPEPLPGFKEVKPQVFAGLYPVEANQYDALRESLEKLKLNDASLQYEPEVSQALGFGFRCGFLGLLHMEIVQERLEREFDMDLITTAPTVVYEVVQSDGTTIMVENPAKMPEPARIAEIREPIVTVNLYMPQDYVGSVITLCEQKRGTQINMQYHGRQVQLTYEIPMAEIVLDFFDRLKSVSRGYASMDYEFKEYRTSDVVKVDMLINGDKVDALSIIVHRSQSQYRGREVAAKMREIIPRQMYDVAIQAAIGAHIIARENIKALRKNVLAKCYGGDITRKKKLLEKQKEGKKRMKQVGSVEIPQEAFLAILRVEDK</sequence>
<evidence type="ECO:0000255" key="1">
    <source>
        <dbReference type="HAMAP-Rule" id="MF_00071"/>
    </source>
</evidence>
<keyword id="KW-0997">Cell inner membrane</keyword>
<keyword id="KW-1003">Cell membrane</keyword>
<keyword id="KW-0342">GTP-binding</keyword>
<keyword id="KW-0378">Hydrolase</keyword>
<keyword id="KW-0472">Membrane</keyword>
<keyword id="KW-0547">Nucleotide-binding</keyword>
<keyword id="KW-0648">Protein biosynthesis</keyword>
<organism>
    <name type="scientific">Burkholderia pseudomallei (strain 1106a)</name>
    <dbReference type="NCBI Taxonomy" id="357348"/>
    <lineage>
        <taxon>Bacteria</taxon>
        <taxon>Pseudomonadati</taxon>
        <taxon>Pseudomonadota</taxon>
        <taxon>Betaproteobacteria</taxon>
        <taxon>Burkholderiales</taxon>
        <taxon>Burkholderiaceae</taxon>
        <taxon>Burkholderia</taxon>
        <taxon>pseudomallei group</taxon>
    </lineage>
</organism>
<gene>
    <name evidence="1" type="primary">lepA</name>
    <name type="ordered locus">BURPS1106A_2842</name>
</gene>
<reference key="1">
    <citation type="journal article" date="2010" name="Genome Biol. Evol.">
        <title>Continuing evolution of Burkholderia mallei through genome reduction and large-scale rearrangements.</title>
        <authorList>
            <person name="Losada L."/>
            <person name="Ronning C.M."/>
            <person name="DeShazer D."/>
            <person name="Woods D."/>
            <person name="Fedorova N."/>
            <person name="Kim H.S."/>
            <person name="Shabalina S.A."/>
            <person name="Pearson T.R."/>
            <person name="Brinkac L."/>
            <person name="Tan P."/>
            <person name="Nandi T."/>
            <person name="Crabtree J."/>
            <person name="Badger J."/>
            <person name="Beckstrom-Sternberg S."/>
            <person name="Saqib M."/>
            <person name="Schutzer S.E."/>
            <person name="Keim P."/>
            <person name="Nierman W.C."/>
        </authorList>
    </citation>
    <scope>NUCLEOTIDE SEQUENCE [LARGE SCALE GENOMIC DNA]</scope>
    <source>
        <strain>1106a</strain>
    </source>
</reference>
<accession>A3NXL8</accession>
<comment type="function">
    <text evidence="1">Required for accurate and efficient protein synthesis under certain stress conditions. May act as a fidelity factor of the translation reaction, by catalyzing a one-codon backward translocation of tRNAs on improperly translocated ribosomes. Back-translocation proceeds from a post-translocation (POST) complex to a pre-translocation (PRE) complex, thus giving elongation factor G a second chance to translocate the tRNAs correctly. Binds to ribosomes in a GTP-dependent manner.</text>
</comment>
<comment type="catalytic activity">
    <reaction evidence="1">
        <text>GTP + H2O = GDP + phosphate + H(+)</text>
        <dbReference type="Rhea" id="RHEA:19669"/>
        <dbReference type="ChEBI" id="CHEBI:15377"/>
        <dbReference type="ChEBI" id="CHEBI:15378"/>
        <dbReference type="ChEBI" id="CHEBI:37565"/>
        <dbReference type="ChEBI" id="CHEBI:43474"/>
        <dbReference type="ChEBI" id="CHEBI:58189"/>
        <dbReference type="EC" id="3.6.5.n1"/>
    </reaction>
</comment>
<comment type="subcellular location">
    <subcellularLocation>
        <location evidence="1">Cell inner membrane</location>
        <topology evidence="1">Peripheral membrane protein</topology>
        <orientation evidence="1">Cytoplasmic side</orientation>
    </subcellularLocation>
</comment>
<comment type="similarity">
    <text evidence="1">Belongs to the TRAFAC class translation factor GTPase superfamily. Classic translation factor GTPase family. LepA subfamily.</text>
</comment>